<keyword id="KW-1003">Cell membrane</keyword>
<keyword id="KW-0472">Membrane</keyword>
<keyword id="KW-1185">Reference proteome</keyword>
<keyword id="KW-0812">Transmembrane</keyword>
<keyword id="KW-1133">Transmembrane helix</keyword>
<gene>
    <name type="ordered locus">AF_1579</name>
</gene>
<organism>
    <name type="scientific">Archaeoglobus fulgidus (strain ATCC 49558 / DSM 4304 / JCM 9628 / NBRC 100126 / VC-16)</name>
    <dbReference type="NCBI Taxonomy" id="224325"/>
    <lineage>
        <taxon>Archaea</taxon>
        <taxon>Methanobacteriati</taxon>
        <taxon>Methanobacteriota</taxon>
        <taxon>Archaeoglobi</taxon>
        <taxon>Archaeoglobales</taxon>
        <taxon>Archaeoglobaceae</taxon>
        <taxon>Archaeoglobus</taxon>
    </lineage>
</organism>
<dbReference type="EMBL" id="AE000782">
    <property type="protein sequence ID" value="AAB89669.1"/>
    <property type="molecule type" value="Genomic_DNA"/>
</dbReference>
<dbReference type="PIR" id="B69447">
    <property type="entry name" value="B69447"/>
</dbReference>
<dbReference type="RefSeq" id="WP_010879076.1">
    <property type="nucleotide sequence ID" value="NC_000917.1"/>
</dbReference>
<dbReference type="STRING" id="224325.AF_1579"/>
<dbReference type="PaxDb" id="224325-AF_1579"/>
<dbReference type="EnsemblBacteria" id="AAB89669">
    <property type="protein sequence ID" value="AAB89669"/>
    <property type="gene ID" value="AF_1579"/>
</dbReference>
<dbReference type="GeneID" id="1484807"/>
<dbReference type="KEGG" id="afu:AF_1579"/>
<dbReference type="HOGENOM" id="CLU_1381328_0_0_2"/>
<dbReference type="Proteomes" id="UP000002199">
    <property type="component" value="Chromosome"/>
</dbReference>
<dbReference type="GO" id="GO:0005886">
    <property type="term" value="C:plasma membrane"/>
    <property type="evidence" value="ECO:0007669"/>
    <property type="project" value="UniProtKB-SubCell"/>
</dbReference>
<accession>O28693</accession>
<protein>
    <recommendedName>
        <fullName>Uncharacterized protein AF_1579</fullName>
    </recommendedName>
</protein>
<comment type="subcellular location">
    <subcellularLocation>
        <location evidence="2">Cell membrane</location>
        <topology evidence="2">Multi-pass membrane protein</topology>
    </subcellularLocation>
</comment>
<evidence type="ECO:0000255" key="1"/>
<evidence type="ECO:0000305" key="2"/>
<reference key="1">
    <citation type="journal article" date="1997" name="Nature">
        <title>The complete genome sequence of the hyperthermophilic, sulphate-reducing archaeon Archaeoglobus fulgidus.</title>
        <authorList>
            <person name="Klenk H.-P."/>
            <person name="Clayton R.A."/>
            <person name="Tomb J.-F."/>
            <person name="White O."/>
            <person name="Nelson K.E."/>
            <person name="Ketchum K.A."/>
            <person name="Dodson R.J."/>
            <person name="Gwinn M.L."/>
            <person name="Hickey E.K."/>
            <person name="Peterson J.D."/>
            <person name="Richardson D.L."/>
            <person name="Kerlavage A.R."/>
            <person name="Graham D.E."/>
            <person name="Kyrpides N.C."/>
            <person name="Fleischmann R.D."/>
            <person name="Quackenbush J."/>
            <person name="Lee N.H."/>
            <person name="Sutton G.G."/>
            <person name="Gill S.R."/>
            <person name="Kirkness E.F."/>
            <person name="Dougherty B.A."/>
            <person name="McKenney K."/>
            <person name="Adams M.D."/>
            <person name="Loftus B.J."/>
            <person name="Peterson S.N."/>
            <person name="Reich C.I."/>
            <person name="McNeil L.K."/>
            <person name="Badger J.H."/>
            <person name="Glodek A."/>
            <person name="Zhou L."/>
            <person name="Overbeek R."/>
            <person name="Gocayne J.D."/>
            <person name="Weidman J.F."/>
            <person name="McDonald L.A."/>
            <person name="Utterback T.R."/>
            <person name="Cotton M.D."/>
            <person name="Spriggs T."/>
            <person name="Artiach P."/>
            <person name="Kaine B.P."/>
            <person name="Sykes S.M."/>
            <person name="Sadow P.W."/>
            <person name="D'Andrea K.P."/>
            <person name="Bowman C."/>
            <person name="Fujii C."/>
            <person name="Garland S.A."/>
            <person name="Mason T.M."/>
            <person name="Olsen G.J."/>
            <person name="Fraser C.M."/>
            <person name="Smith H.O."/>
            <person name="Woese C.R."/>
            <person name="Venter J.C."/>
        </authorList>
    </citation>
    <scope>NUCLEOTIDE SEQUENCE [LARGE SCALE GENOMIC DNA]</scope>
    <source>
        <strain>ATCC 49558 / DSM 4304 / JCM 9628 / NBRC 100126 / VC-16</strain>
    </source>
</reference>
<feature type="chain" id="PRO_0000128031" description="Uncharacterized protein AF_1579">
    <location>
        <begin position="1"/>
        <end position="197"/>
    </location>
</feature>
<feature type="transmembrane region" description="Helical" evidence="1">
    <location>
        <begin position="5"/>
        <end position="23"/>
    </location>
</feature>
<feature type="transmembrane region" description="Helical" evidence="1">
    <location>
        <begin position="27"/>
        <end position="46"/>
    </location>
</feature>
<feature type="transmembrane region" description="Helical" evidence="1">
    <location>
        <begin position="55"/>
        <end position="77"/>
    </location>
</feature>
<feature type="transmembrane region" description="Helical" evidence="1">
    <location>
        <begin position="87"/>
        <end position="109"/>
    </location>
</feature>
<feature type="transmembrane region" description="Helical" evidence="1">
    <location>
        <begin position="116"/>
        <end position="138"/>
    </location>
</feature>
<feature type="transmembrane region" description="Helical" evidence="1">
    <location>
        <begin position="153"/>
        <end position="174"/>
    </location>
</feature>
<sequence>MRDKLNLLIFFIAALLIALGLRFTPTISFAGLILLLAVVPALMLRFRDFFSREAVIAGIFVLGLALNALIGVALAYTKSMEFGMSLLSLLPLTLVLTANVFATSLVIRIDASGKEVFAFYFWFLISVGLAFLFLLPTGGSAEISPRGAGWFRFVEFPILYSELALIPSAFCLVFQRVRTFLFFSPFPLFLDMSWSSL</sequence>
<proteinExistence type="predicted"/>
<name>Y1579_ARCFU</name>